<gene>
    <name evidence="5" type="primary">fasR</name>
    <name evidence="7" type="ordered locus">MSMEG_1935</name>
    <name evidence="8" type="ordered locus">MSMEI_1893</name>
</gene>
<sequence>MSDLANTAERRGEKRPAGGNRRGNRLPRDERRGQLLIAASEVFVDRGYHAAGMDEIADRAGVSKPVLYQHFSSKLELYLAVLQRHVDNLVSGVRQALRTTTDNRQRLRAAVEAFFDFIEHDSQGYRLIFENDYVTEPQVAAQVKVATEACTDAVFDLISRDSGLEAHRARMIAVGLVAISVDSARYWLNNDRPIDKDSAVEGTVQFAWGGLSHVPLTRS</sequence>
<feature type="chain" id="PRO_0000461803" description="HTH-type transcriptional activator FasR">
    <location>
        <begin position="1"/>
        <end position="219"/>
    </location>
</feature>
<feature type="domain" description="HTH tetR-type" evidence="2">
    <location>
        <begin position="29"/>
        <end position="89"/>
    </location>
</feature>
<feature type="DNA-binding region" description="H-T-H motif" evidence="2">
    <location>
        <begin position="52"/>
        <end position="71"/>
    </location>
</feature>
<feature type="region of interest" description="Disordered" evidence="3">
    <location>
        <begin position="1"/>
        <end position="30"/>
    </location>
</feature>
<name>FASR_MYCS2</name>
<proteinExistence type="evidence at protein level"/>
<organism>
    <name type="scientific">Mycolicibacterium smegmatis (strain ATCC 700084 / mc(2)155)</name>
    <name type="common">Mycobacterium smegmatis</name>
    <dbReference type="NCBI Taxonomy" id="246196"/>
    <lineage>
        <taxon>Bacteria</taxon>
        <taxon>Bacillati</taxon>
        <taxon>Actinomycetota</taxon>
        <taxon>Actinomycetes</taxon>
        <taxon>Mycobacteriales</taxon>
        <taxon>Mycobacteriaceae</taxon>
        <taxon>Mycolicibacterium</taxon>
    </lineage>
</organism>
<comment type="function">
    <text evidence="1 4">Transcriptional activator that plays a central role in sensing mycobacterial long-chain fatty acids and regulating lipid biosynthesis (PubMed:23721164). Activates the expression of the genes encoding the fatty acid synthase (fas) and the 4-phosphopantetheinyl transferase (acpS), whose products are involved in the fatty acid and mycolic acid biosynthesis (PubMed:23721164). Specifically binds to three conserved operator sequences present in the fas-acpS promoter region (By similarity). Essential for M.smegmatis viability (PubMed:23721164).</text>
</comment>
<comment type="activity regulation">
    <text evidence="1">FasR:DNA binding is regulated by long-chain acyl-CoAs (C14- to C26-CoA), which act as effector molecules that modulate the affinity of FasR for its DNA binding sequences and therefore modulate the expression of the essential fas-acpS operon.</text>
</comment>
<comment type="subunit">
    <text evidence="1">Homodimer.</text>
</comment>
<comment type="disruption phenotype">
    <text evidence="4">Essential, cannot be deleted.</text>
</comment>
<dbReference type="EMBL" id="CP000480">
    <property type="protein sequence ID" value="ABK72683.1"/>
    <property type="molecule type" value="Genomic_DNA"/>
</dbReference>
<dbReference type="EMBL" id="CP001663">
    <property type="protein sequence ID" value="AFP38365.1"/>
    <property type="molecule type" value="Genomic_DNA"/>
</dbReference>
<dbReference type="RefSeq" id="WP_003893315.1">
    <property type="nucleotide sequence ID" value="NZ_SIJM01000020.1"/>
</dbReference>
<dbReference type="RefSeq" id="YP_886301.1">
    <property type="nucleotide sequence ID" value="NC_008596.1"/>
</dbReference>
<dbReference type="STRING" id="246196.MSMEG_1935"/>
<dbReference type="PaxDb" id="246196-MSMEI_1893"/>
<dbReference type="KEGG" id="msb:LJ00_09655"/>
<dbReference type="KEGG" id="msg:MSMEI_1893"/>
<dbReference type="KEGG" id="msm:MSMEG_1935"/>
<dbReference type="PATRIC" id="fig|246196.19.peg.1915"/>
<dbReference type="eggNOG" id="COG1309">
    <property type="taxonomic scope" value="Bacteria"/>
</dbReference>
<dbReference type="OrthoDB" id="70491at2"/>
<dbReference type="Proteomes" id="UP000000757">
    <property type="component" value="Chromosome"/>
</dbReference>
<dbReference type="Proteomes" id="UP000006158">
    <property type="component" value="Chromosome"/>
</dbReference>
<dbReference type="GO" id="GO:0003700">
    <property type="term" value="F:DNA-binding transcription factor activity"/>
    <property type="evidence" value="ECO:0007669"/>
    <property type="project" value="TreeGrafter"/>
</dbReference>
<dbReference type="GO" id="GO:0000976">
    <property type="term" value="F:transcription cis-regulatory region binding"/>
    <property type="evidence" value="ECO:0007669"/>
    <property type="project" value="TreeGrafter"/>
</dbReference>
<dbReference type="FunFam" id="1.10.10.60:FF:000141">
    <property type="entry name" value="TetR family transcriptional regulator"/>
    <property type="match status" value="1"/>
</dbReference>
<dbReference type="Gene3D" id="1.10.357.10">
    <property type="entry name" value="Tetracycline Repressor, domain 2"/>
    <property type="match status" value="1"/>
</dbReference>
<dbReference type="InterPro" id="IPR054129">
    <property type="entry name" value="DesT_TetR_C"/>
</dbReference>
<dbReference type="InterPro" id="IPR009057">
    <property type="entry name" value="Homeodomain-like_sf"/>
</dbReference>
<dbReference type="InterPro" id="IPR050109">
    <property type="entry name" value="HTH-type_TetR-like_transc_reg"/>
</dbReference>
<dbReference type="InterPro" id="IPR001647">
    <property type="entry name" value="HTH_TetR"/>
</dbReference>
<dbReference type="InterPro" id="IPR036271">
    <property type="entry name" value="Tet_transcr_reg_TetR-rel_C_sf"/>
</dbReference>
<dbReference type="PANTHER" id="PTHR30055">
    <property type="entry name" value="HTH-TYPE TRANSCRIPTIONAL REGULATOR RUTR"/>
    <property type="match status" value="1"/>
</dbReference>
<dbReference type="PANTHER" id="PTHR30055:SF160">
    <property type="entry name" value="TRANSCRIPTIONAL REGULATORY PROTEIN (PROBABLY ASNC-FAMILY)-RELATED"/>
    <property type="match status" value="1"/>
</dbReference>
<dbReference type="Pfam" id="PF21943">
    <property type="entry name" value="TetR_C_46"/>
    <property type="match status" value="1"/>
</dbReference>
<dbReference type="Pfam" id="PF00440">
    <property type="entry name" value="TetR_N"/>
    <property type="match status" value="1"/>
</dbReference>
<dbReference type="PRINTS" id="PR00455">
    <property type="entry name" value="HTHTETR"/>
</dbReference>
<dbReference type="SUPFAM" id="SSF46689">
    <property type="entry name" value="Homeodomain-like"/>
    <property type="match status" value="1"/>
</dbReference>
<dbReference type="SUPFAM" id="SSF48498">
    <property type="entry name" value="Tetracyclin repressor-like, C-terminal domain"/>
    <property type="match status" value="1"/>
</dbReference>
<dbReference type="PROSITE" id="PS50977">
    <property type="entry name" value="HTH_TETR_2"/>
    <property type="match status" value="1"/>
</dbReference>
<evidence type="ECO:0000250" key="1">
    <source>
        <dbReference type="UniProtKB" id="O05858"/>
    </source>
</evidence>
<evidence type="ECO:0000255" key="2">
    <source>
        <dbReference type="PROSITE-ProRule" id="PRU00335"/>
    </source>
</evidence>
<evidence type="ECO:0000256" key="3">
    <source>
        <dbReference type="SAM" id="MobiDB-lite"/>
    </source>
</evidence>
<evidence type="ECO:0000269" key="4">
    <source>
    </source>
</evidence>
<evidence type="ECO:0000303" key="5">
    <source>
    </source>
</evidence>
<evidence type="ECO:0000305" key="6"/>
<evidence type="ECO:0000312" key="7">
    <source>
        <dbReference type="EMBL" id="ABK72683.1"/>
    </source>
</evidence>
<evidence type="ECO:0000312" key="8">
    <source>
        <dbReference type="EMBL" id="AFP38365.1"/>
    </source>
</evidence>
<keyword id="KW-0010">Activator</keyword>
<keyword id="KW-0238">DNA-binding</keyword>
<keyword id="KW-1185">Reference proteome</keyword>
<keyword id="KW-0804">Transcription</keyword>
<keyword id="KW-0805">Transcription regulation</keyword>
<protein>
    <recommendedName>
        <fullName evidence="6">HTH-type transcriptional activator FasR</fullName>
    </recommendedName>
    <alternativeName>
        <fullName evidence="5">Fatty acid synthesis regulator</fullName>
    </alternativeName>
</protein>
<reference evidence="7" key="1">
    <citation type="submission" date="2006-10" db="EMBL/GenBank/DDBJ databases">
        <authorList>
            <person name="Fleischmann R.D."/>
            <person name="Dodson R.J."/>
            <person name="Haft D.H."/>
            <person name="Merkel J.S."/>
            <person name="Nelson W.C."/>
            <person name="Fraser C.M."/>
        </authorList>
    </citation>
    <scope>NUCLEOTIDE SEQUENCE [LARGE SCALE GENOMIC DNA]</scope>
    <source>
        <strain>ATCC 700084 / mc(2)155</strain>
    </source>
</reference>
<reference evidence="8" key="2">
    <citation type="journal article" date="2007" name="Genome Biol.">
        <title>Interrupted coding sequences in Mycobacterium smegmatis: authentic mutations or sequencing errors?</title>
        <authorList>
            <person name="Deshayes C."/>
            <person name="Perrodou E."/>
            <person name="Gallien S."/>
            <person name="Euphrasie D."/>
            <person name="Schaeffer C."/>
            <person name="Van-Dorsselaer A."/>
            <person name="Poch O."/>
            <person name="Lecompte O."/>
            <person name="Reyrat J.-M."/>
        </authorList>
    </citation>
    <scope>NUCLEOTIDE SEQUENCE [LARGE SCALE GENOMIC DNA]</scope>
    <source>
        <strain>ATCC 700084 / mc(2)155</strain>
    </source>
</reference>
<reference evidence="8" key="3">
    <citation type="journal article" date="2009" name="Genome Res.">
        <title>Ortho-proteogenomics: multiple proteomes investigation through orthology and a new MS-based protocol.</title>
        <authorList>
            <person name="Gallien S."/>
            <person name="Perrodou E."/>
            <person name="Carapito C."/>
            <person name="Deshayes C."/>
            <person name="Reyrat J.-M."/>
            <person name="Van Dorsselaer A."/>
            <person name="Poch O."/>
            <person name="Schaeffer C."/>
            <person name="Lecompte O."/>
        </authorList>
    </citation>
    <scope>NUCLEOTIDE SEQUENCE [LARGE SCALE GENOMIC DNA]</scope>
    <source>
        <strain>ATCC 700084 / mc(2)155</strain>
    </source>
</reference>
<reference key="4">
    <citation type="journal article" date="2013" name="Mol. Microbiol.">
        <title>Transcriptional regulation of fatty acid biosynthesis in mycobacteria.</title>
        <authorList>
            <person name="Mondino S."/>
            <person name="Gago G."/>
            <person name="Gramajo H."/>
        </authorList>
    </citation>
    <scope>FUNCTION</scope>
    <scope>DNA-BINDING</scope>
    <scope>DISRUPTION PHENOTYPE</scope>
    <source>
        <strain>H37Rv</strain>
    </source>
</reference>
<accession>A0QTR3</accession>
<accession>I7FA01</accession>